<reference key="1">
    <citation type="journal article" date="2008" name="BMC Genomics">
        <title>The genome of Aeromonas salmonicida subsp. salmonicida A449: insights into the evolution of a fish pathogen.</title>
        <authorList>
            <person name="Reith M.E."/>
            <person name="Singh R.K."/>
            <person name="Curtis B."/>
            <person name="Boyd J.M."/>
            <person name="Bouevitch A."/>
            <person name="Kimball J."/>
            <person name="Munholland J."/>
            <person name="Murphy C."/>
            <person name="Sarty D."/>
            <person name="Williams J."/>
            <person name="Nash J.H."/>
            <person name="Johnson S.C."/>
            <person name="Brown L.L."/>
        </authorList>
    </citation>
    <scope>NUCLEOTIDE SEQUENCE [LARGE SCALE GENOMIC DNA]</scope>
    <source>
        <strain>A449</strain>
    </source>
</reference>
<feature type="chain" id="PRO_1000044739" description="UPF0251 protein ASA_1331">
    <location>
        <begin position="1"/>
        <end position="102"/>
    </location>
</feature>
<dbReference type="EMBL" id="CP000644">
    <property type="protein sequence ID" value="ABO89433.1"/>
    <property type="molecule type" value="Genomic_DNA"/>
</dbReference>
<dbReference type="RefSeq" id="WP_005319348.1">
    <property type="nucleotide sequence ID" value="NC_009348.1"/>
</dbReference>
<dbReference type="SMR" id="A4SKL1"/>
<dbReference type="STRING" id="29491.GCA_000820065_03231"/>
<dbReference type="KEGG" id="asa:ASA_1331"/>
<dbReference type="eggNOG" id="COG1342">
    <property type="taxonomic scope" value="Bacteria"/>
</dbReference>
<dbReference type="HOGENOM" id="CLU_094511_2_1_6"/>
<dbReference type="Proteomes" id="UP000000225">
    <property type="component" value="Chromosome"/>
</dbReference>
<dbReference type="Gene3D" id="1.10.10.10">
    <property type="entry name" value="Winged helix-like DNA-binding domain superfamily/Winged helix DNA-binding domain"/>
    <property type="match status" value="1"/>
</dbReference>
<dbReference type="HAMAP" id="MF_00674">
    <property type="entry name" value="UPF0251"/>
    <property type="match status" value="1"/>
</dbReference>
<dbReference type="InterPro" id="IPR013324">
    <property type="entry name" value="RNA_pol_sigma_r3/r4-like"/>
</dbReference>
<dbReference type="InterPro" id="IPR002852">
    <property type="entry name" value="UPF0251"/>
</dbReference>
<dbReference type="InterPro" id="IPR036388">
    <property type="entry name" value="WH-like_DNA-bd_sf"/>
</dbReference>
<dbReference type="PANTHER" id="PTHR37478">
    <property type="match status" value="1"/>
</dbReference>
<dbReference type="PANTHER" id="PTHR37478:SF2">
    <property type="entry name" value="UPF0251 PROTEIN TK0562"/>
    <property type="match status" value="1"/>
</dbReference>
<dbReference type="Pfam" id="PF02001">
    <property type="entry name" value="DUF134"/>
    <property type="match status" value="1"/>
</dbReference>
<dbReference type="SUPFAM" id="SSF88659">
    <property type="entry name" value="Sigma3 and sigma4 domains of RNA polymerase sigma factors"/>
    <property type="match status" value="1"/>
</dbReference>
<name>Y1331_AERS4</name>
<evidence type="ECO:0000255" key="1">
    <source>
        <dbReference type="HAMAP-Rule" id="MF_00674"/>
    </source>
</evidence>
<protein>
    <recommendedName>
        <fullName evidence="1">UPF0251 protein ASA_1331</fullName>
    </recommendedName>
</protein>
<accession>A4SKL1</accession>
<sequence>MPRPKIARQICGRPANSCFKPNGRPMHQLEQVALAADEFEALRLVDLEGMQQQEAAVVMGVSRQTLANILKKARYKVVDCLSQGKALMMQASDPDTSGDIPL</sequence>
<comment type="similarity">
    <text evidence="1">Belongs to the UPF0251 family.</text>
</comment>
<gene>
    <name type="ordered locus">ASA_1331</name>
</gene>
<proteinExistence type="inferred from homology"/>
<organism>
    <name type="scientific">Aeromonas salmonicida (strain A449)</name>
    <dbReference type="NCBI Taxonomy" id="382245"/>
    <lineage>
        <taxon>Bacteria</taxon>
        <taxon>Pseudomonadati</taxon>
        <taxon>Pseudomonadota</taxon>
        <taxon>Gammaproteobacteria</taxon>
        <taxon>Aeromonadales</taxon>
        <taxon>Aeromonadaceae</taxon>
        <taxon>Aeromonas</taxon>
    </lineage>
</organism>